<accession>B7KCV9</accession>
<name>PSBZ_GLOC7</name>
<reference key="1">
    <citation type="journal article" date="2011" name="MBio">
        <title>Novel metabolic attributes of the genus Cyanothece, comprising a group of unicellular nitrogen-fixing Cyanobacteria.</title>
        <authorList>
            <person name="Bandyopadhyay A."/>
            <person name="Elvitigala T."/>
            <person name="Welsh E."/>
            <person name="Stockel J."/>
            <person name="Liberton M."/>
            <person name="Min H."/>
            <person name="Sherman L.A."/>
            <person name="Pakrasi H.B."/>
        </authorList>
    </citation>
    <scope>NUCLEOTIDE SEQUENCE [LARGE SCALE GENOMIC DNA]</scope>
    <source>
        <strain>PCC 7424</strain>
    </source>
</reference>
<dbReference type="EMBL" id="CP001291">
    <property type="protein sequence ID" value="ACK71660.1"/>
    <property type="molecule type" value="Genomic_DNA"/>
</dbReference>
<dbReference type="RefSeq" id="WP_015955256.1">
    <property type="nucleotide sequence ID" value="NC_011729.1"/>
</dbReference>
<dbReference type="SMR" id="B7KCV9"/>
<dbReference type="STRING" id="65393.PCC7424_3261"/>
<dbReference type="KEGG" id="cyc:PCC7424_3261"/>
<dbReference type="eggNOG" id="ENOG5032ZB0">
    <property type="taxonomic scope" value="Bacteria"/>
</dbReference>
<dbReference type="HOGENOM" id="CLU_195286_1_0_3"/>
<dbReference type="OrthoDB" id="490783at2"/>
<dbReference type="Proteomes" id="UP000002384">
    <property type="component" value="Chromosome"/>
</dbReference>
<dbReference type="GO" id="GO:0009539">
    <property type="term" value="C:photosystem II reaction center"/>
    <property type="evidence" value="ECO:0007669"/>
    <property type="project" value="InterPro"/>
</dbReference>
<dbReference type="GO" id="GO:0031676">
    <property type="term" value="C:plasma membrane-derived thylakoid membrane"/>
    <property type="evidence" value="ECO:0007669"/>
    <property type="project" value="UniProtKB-SubCell"/>
</dbReference>
<dbReference type="GO" id="GO:0015979">
    <property type="term" value="P:photosynthesis"/>
    <property type="evidence" value="ECO:0007669"/>
    <property type="project" value="UniProtKB-UniRule"/>
</dbReference>
<dbReference type="GO" id="GO:0042549">
    <property type="term" value="P:photosystem II stabilization"/>
    <property type="evidence" value="ECO:0007669"/>
    <property type="project" value="InterPro"/>
</dbReference>
<dbReference type="Gene3D" id="1.10.287.740">
    <property type="entry name" value="Photosystem II PsbZ, reaction centre"/>
    <property type="match status" value="1"/>
</dbReference>
<dbReference type="HAMAP" id="MF_00644">
    <property type="entry name" value="PSII_PsbZ"/>
    <property type="match status" value="1"/>
</dbReference>
<dbReference type="InterPro" id="IPR002644">
    <property type="entry name" value="PSII_PsbZ"/>
</dbReference>
<dbReference type="InterPro" id="IPR036512">
    <property type="entry name" value="PSII_PsbZ_sf"/>
</dbReference>
<dbReference type="NCBIfam" id="TIGR03043">
    <property type="entry name" value="PS_II_psbZ"/>
    <property type="match status" value="1"/>
</dbReference>
<dbReference type="PANTHER" id="PTHR34971">
    <property type="entry name" value="PHOTOSYSTEM II REACTION CENTER PROTEIN Z"/>
    <property type="match status" value="1"/>
</dbReference>
<dbReference type="PANTHER" id="PTHR34971:SF2">
    <property type="entry name" value="PHOTOSYSTEM II REACTION CENTER PROTEIN Z"/>
    <property type="match status" value="1"/>
</dbReference>
<dbReference type="Pfam" id="PF01737">
    <property type="entry name" value="Ycf9"/>
    <property type="match status" value="1"/>
</dbReference>
<dbReference type="SUPFAM" id="SSF161055">
    <property type="entry name" value="PsbZ-like"/>
    <property type="match status" value="1"/>
</dbReference>
<protein>
    <recommendedName>
        <fullName evidence="1">Photosystem II reaction center protein Z</fullName>
        <shortName evidence="1">PSII-Z</shortName>
    </recommendedName>
</protein>
<keyword id="KW-0472">Membrane</keyword>
<keyword id="KW-0602">Photosynthesis</keyword>
<keyword id="KW-0604">Photosystem II</keyword>
<keyword id="KW-0674">Reaction center</keyword>
<keyword id="KW-1185">Reference proteome</keyword>
<keyword id="KW-0793">Thylakoid</keyword>
<keyword id="KW-0812">Transmembrane</keyword>
<keyword id="KW-1133">Transmembrane helix</keyword>
<comment type="function">
    <text evidence="1">May control the interaction of photosystem II (PSII) cores with the light-harvesting antenna, regulates electron flow through the 2 photosystem reaction centers. PSII is a light-driven water plastoquinone oxidoreductase, using light energy to abstract electrons from H(2)O, generating a proton gradient subsequently used for ATP formation.</text>
</comment>
<comment type="subunit">
    <text evidence="1">PSII is composed of 1 copy each of membrane proteins PsbA, PsbB, PsbC, PsbD, PsbE, PsbF, PsbH, PsbI, PsbJ, PsbK, PsbL, PsbM, PsbT, PsbX, PsbY, PsbZ, Psb30/Ycf12, peripheral proteins PsbO, CyanoQ (PsbQ), PsbU, PsbV and a large number of cofactors. It forms dimeric complexes.</text>
</comment>
<comment type="subcellular location">
    <subcellularLocation>
        <location evidence="1">Cellular thylakoid membrane</location>
        <topology evidence="1">Multi-pass membrane protein</topology>
    </subcellularLocation>
</comment>
<comment type="similarity">
    <text evidence="1">Belongs to the PsbZ family.</text>
</comment>
<gene>
    <name evidence="1" type="primary">psbZ</name>
    <name type="ordered locus">PCC7424_3261</name>
</gene>
<sequence>MSIVFQIALAALVFFSFVMVIGVPFAYAAPQYWDQSKPLLWVGSGIWTILVIVVAVLNFFVI</sequence>
<proteinExistence type="inferred from homology"/>
<feature type="chain" id="PRO_1000130908" description="Photosystem II reaction center protein Z">
    <location>
        <begin position="1"/>
        <end position="62"/>
    </location>
</feature>
<feature type="transmembrane region" description="Helical" evidence="1">
    <location>
        <begin position="8"/>
        <end position="28"/>
    </location>
</feature>
<feature type="transmembrane region" description="Helical" evidence="1">
    <location>
        <begin position="41"/>
        <end position="61"/>
    </location>
</feature>
<evidence type="ECO:0000255" key="1">
    <source>
        <dbReference type="HAMAP-Rule" id="MF_00644"/>
    </source>
</evidence>
<organism>
    <name type="scientific">Gloeothece citriformis (strain PCC 7424)</name>
    <name type="common">Cyanothece sp. (strain PCC 7424)</name>
    <dbReference type="NCBI Taxonomy" id="65393"/>
    <lineage>
        <taxon>Bacteria</taxon>
        <taxon>Bacillati</taxon>
        <taxon>Cyanobacteriota</taxon>
        <taxon>Cyanophyceae</taxon>
        <taxon>Oscillatoriophycideae</taxon>
        <taxon>Chroococcales</taxon>
        <taxon>Aphanothecaceae</taxon>
        <taxon>Gloeothece</taxon>
        <taxon>Gloeothece citriformis</taxon>
    </lineage>
</organism>